<sequence>MVNLGLSRVDDAVASKHPGLGEYAACQSNAFVKGVSTFVTGTGATFGLQMLVQRKLPYPFQWKVLLAVVAGSVASYWVTRVESQKCSNLWLFLETGQLPKDMGTDRRS</sequence>
<keyword id="KW-0472">Membrane</keyword>
<keyword id="KW-1185">Reference proteome</keyword>
<keyword id="KW-0812">Transmembrane</keyword>
<keyword id="KW-1133">Transmembrane helix</keyword>
<dbReference type="EMBL" id="BC102696">
    <property type="protein sequence ID" value="AAI02697.1"/>
    <property type="molecule type" value="mRNA"/>
</dbReference>
<dbReference type="RefSeq" id="NP_001029634.1">
    <property type="nucleotide sequence ID" value="NM_001034462.2"/>
</dbReference>
<dbReference type="SMR" id="Q3SZU9"/>
<dbReference type="FunCoup" id="Q3SZU9">
    <property type="interactions" value="285"/>
</dbReference>
<dbReference type="PaxDb" id="9913-ENSBTAP00000018443"/>
<dbReference type="GeneID" id="514305"/>
<dbReference type="KEGG" id="bta:514305"/>
<dbReference type="CTD" id="85014"/>
<dbReference type="VEuPathDB" id="HostDB:ENSBTAG00000013889"/>
<dbReference type="eggNOG" id="ENOG502SFAD">
    <property type="taxonomic scope" value="Eukaryota"/>
</dbReference>
<dbReference type="HOGENOM" id="CLU_163737_0_0_1"/>
<dbReference type="InParanoid" id="Q3SZU9"/>
<dbReference type="OMA" id="CQSNAFM"/>
<dbReference type="OrthoDB" id="10056589at2759"/>
<dbReference type="TreeFam" id="TF330755"/>
<dbReference type="Proteomes" id="UP000009136">
    <property type="component" value="Chromosome 11"/>
</dbReference>
<dbReference type="Bgee" id="ENSBTAG00000013889">
    <property type="expression patterns" value="Expressed in digestive system secreted substance and 104 other cell types or tissues"/>
</dbReference>
<dbReference type="GO" id="GO:0016020">
    <property type="term" value="C:membrane"/>
    <property type="evidence" value="ECO:0007669"/>
    <property type="project" value="UniProtKB-SubCell"/>
</dbReference>
<dbReference type="Gene3D" id="1.10.3350.20">
    <property type="entry name" value="Tmem141 protein family"/>
    <property type="match status" value="1"/>
</dbReference>
<dbReference type="InterPro" id="IPR026788">
    <property type="entry name" value="Tmem141"/>
</dbReference>
<dbReference type="InterPro" id="IPR038259">
    <property type="entry name" value="Tmem141_sf"/>
</dbReference>
<dbReference type="PANTHER" id="PTHR47229">
    <property type="entry name" value="TRANSMEMBRANE PROTEIN 141"/>
    <property type="match status" value="1"/>
</dbReference>
<dbReference type="PANTHER" id="PTHR47229:SF1">
    <property type="entry name" value="TRANSMEMBRANE PROTEIN 141"/>
    <property type="match status" value="1"/>
</dbReference>
<dbReference type="Pfam" id="PF15110">
    <property type="entry name" value="TMEM141"/>
    <property type="match status" value="1"/>
</dbReference>
<comment type="subcellular location">
    <subcellularLocation>
        <location evidence="2">Membrane</location>
        <topology evidence="2">Multi-pass membrane protein</topology>
    </subcellularLocation>
</comment>
<comment type="similarity">
    <text evidence="2">Belongs to the TMEM141 family.</text>
</comment>
<name>TM141_BOVIN</name>
<accession>Q3SZU9</accession>
<evidence type="ECO:0000255" key="1"/>
<evidence type="ECO:0000305" key="2"/>
<organism>
    <name type="scientific">Bos taurus</name>
    <name type="common">Bovine</name>
    <dbReference type="NCBI Taxonomy" id="9913"/>
    <lineage>
        <taxon>Eukaryota</taxon>
        <taxon>Metazoa</taxon>
        <taxon>Chordata</taxon>
        <taxon>Craniata</taxon>
        <taxon>Vertebrata</taxon>
        <taxon>Euteleostomi</taxon>
        <taxon>Mammalia</taxon>
        <taxon>Eutheria</taxon>
        <taxon>Laurasiatheria</taxon>
        <taxon>Artiodactyla</taxon>
        <taxon>Ruminantia</taxon>
        <taxon>Pecora</taxon>
        <taxon>Bovidae</taxon>
        <taxon>Bovinae</taxon>
        <taxon>Bos</taxon>
    </lineage>
</organism>
<proteinExistence type="inferred from homology"/>
<gene>
    <name type="primary">TMEM141</name>
</gene>
<feature type="chain" id="PRO_0000279506" description="Transmembrane protein 141">
    <location>
        <begin position="1"/>
        <end position="108"/>
    </location>
</feature>
<feature type="transmembrane region" description="Helical" evidence="1">
    <location>
        <begin position="34"/>
        <end position="52"/>
    </location>
</feature>
<feature type="transmembrane region" description="Helical" evidence="1">
    <location>
        <begin position="62"/>
        <end position="78"/>
    </location>
</feature>
<reference key="1">
    <citation type="submission" date="2005-08" db="EMBL/GenBank/DDBJ databases">
        <authorList>
            <consortium name="NIH - Mammalian Gene Collection (MGC) project"/>
        </authorList>
    </citation>
    <scope>NUCLEOTIDE SEQUENCE [LARGE SCALE MRNA]</scope>
    <source>
        <strain>Crossbred X Angus</strain>
        <tissue>Ileum</tissue>
    </source>
</reference>
<protein>
    <recommendedName>
        <fullName>Transmembrane protein 141</fullName>
    </recommendedName>
</protein>